<feature type="chain" id="PRO_1000195167" description="Holliday junction branch migration complex subunit RuvA">
    <location>
        <begin position="1"/>
        <end position="193"/>
    </location>
</feature>
<feature type="region of interest" description="Domain I" evidence="1">
    <location>
        <begin position="1"/>
        <end position="63"/>
    </location>
</feature>
<feature type="region of interest" description="Domain II" evidence="1">
    <location>
        <begin position="64"/>
        <end position="148"/>
    </location>
</feature>
<feature type="region of interest" description="Flexible linker" evidence="1">
    <location>
        <begin position="149"/>
        <end position="150"/>
    </location>
</feature>
<feature type="region of interest" description="Domain III" evidence="1">
    <location>
        <begin position="150"/>
        <end position="193"/>
    </location>
</feature>
<proteinExistence type="inferred from homology"/>
<evidence type="ECO:0000255" key="1">
    <source>
        <dbReference type="HAMAP-Rule" id="MF_00031"/>
    </source>
</evidence>
<sequence length="193" mass="21626">MIGKLTGTVTDLCQESLILDVGGVGYNVFTTRRLIDSLRTGQNLSLYIEHYFLENINKLYGFECRKSQEVARMLSKVKGINYKIALSLLNHLELGELILAIQNKDESRLKIKGIGEKLVKRIITETYEDFLKLDSHLSGIASSTNVHIASEAVSALVKLGFQHKPSHKVVMEIMTKRPAIEIAELITLALKML</sequence>
<dbReference type="EMBL" id="CP000237">
    <property type="protein sequence ID" value="ABD45675.1"/>
    <property type="molecule type" value="Genomic_DNA"/>
</dbReference>
<dbReference type="SMR" id="Q2GDJ1"/>
<dbReference type="STRING" id="222891.NSE_0574"/>
<dbReference type="KEGG" id="nse:NSE_0574"/>
<dbReference type="eggNOG" id="COG0632">
    <property type="taxonomic scope" value="Bacteria"/>
</dbReference>
<dbReference type="HOGENOM" id="CLU_087936_3_0_5"/>
<dbReference type="OrthoDB" id="5293449at2"/>
<dbReference type="Proteomes" id="UP000001942">
    <property type="component" value="Chromosome"/>
</dbReference>
<dbReference type="GO" id="GO:0005737">
    <property type="term" value="C:cytoplasm"/>
    <property type="evidence" value="ECO:0007669"/>
    <property type="project" value="UniProtKB-SubCell"/>
</dbReference>
<dbReference type="GO" id="GO:0009379">
    <property type="term" value="C:Holliday junction helicase complex"/>
    <property type="evidence" value="ECO:0007669"/>
    <property type="project" value="InterPro"/>
</dbReference>
<dbReference type="GO" id="GO:0048476">
    <property type="term" value="C:Holliday junction resolvase complex"/>
    <property type="evidence" value="ECO:0007669"/>
    <property type="project" value="UniProtKB-UniRule"/>
</dbReference>
<dbReference type="GO" id="GO:0005524">
    <property type="term" value="F:ATP binding"/>
    <property type="evidence" value="ECO:0007669"/>
    <property type="project" value="InterPro"/>
</dbReference>
<dbReference type="GO" id="GO:0000400">
    <property type="term" value="F:four-way junction DNA binding"/>
    <property type="evidence" value="ECO:0007669"/>
    <property type="project" value="UniProtKB-UniRule"/>
</dbReference>
<dbReference type="GO" id="GO:0009378">
    <property type="term" value="F:four-way junction helicase activity"/>
    <property type="evidence" value="ECO:0007669"/>
    <property type="project" value="InterPro"/>
</dbReference>
<dbReference type="GO" id="GO:0006310">
    <property type="term" value="P:DNA recombination"/>
    <property type="evidence" value="ECO:0007669"/>
    <property type="project" value="UniProtKB-UniRule"/>
</dbReference>
<dbReference type="GO" id="GO:0006281">
    <property type="term" value="P:DNA repair"/>
    <property type="evidence" value="ECO:0007669"/>
    <property type="project" value="UniProtKB-UniRule"/>
</dbReference>
<dbReference type="CDD" id="cd14332">
    <property type="entry name" value="UBA_RuvA_C"/>
    <property type="match status" value="1"/>
</dbReference>
<dbReference type="Gene3D" id="1.10.150.20">
    <property type="entry name" value="5' to 3' exonuclease, C-terminal subdomain"/>
    <property type="match status" value="1"/>
</dbReference>
<dbReference type="Gene3D" id="1.10.8.10">
    <property type="entry name" value="DNA helicase RuvA subunit, C-terminal domain"/>
    <property type="match status" value="1"/>
</dbReference>
<dbReference type="Gene3D" id="2.40.50.140">
    <property type="entry name" value="Nucleic acid-binding proteins"/>
    <property type="match status" value="1"/>
</dbReference>
<dbReference type="HAMAP" id="MF_00031">
    <property type="entry name" value="DNA_HJ_migration_RuvA"/>
    <property type="match status" value="1"/>
</dbReference>
<dbReference type="InterPro" id="IPR013849">
    <property type="entry name" value="DNA_helicase_Holl-junc_RuvA_I"/>
</dbReference>
<dbReference type="InterPro" id="IPR012340">
    <property type="entry name" value="NA-bd_OB-fold"/>
</dbReference>
<dbReference type="InterPro" id="IPR000085">
    <property type="entry name" value="RuvA"/>
</dbReference>
<dbReference type="InterPro" id="IPR010994">
    <property type="entry name" value="RuvA_2-like"/>
</dbReference>
<dbReference type="InterPro" id="IPR011114">
    <property type="entry name" value="RuvA_C"/>
</dbReference>
<dbReference type="InterPro" id="IPR036267">
    <property type="entry name" value="RuvA_C_sf"/>
</dbReference>
<dbReference type="NCBIfam" id="TIGR00084">
    <property type="entry name" value="ruvA"/>
    <property type="match status" value="1"/>
</dbReference>
<dbReference type="Pfam" id="PF14520">
    <property type="entry name" value="HHH_5"/>
    <property type="match status" value="1"/>
</dbReference>
<dbReference type="Pfam" id="PF01330">
    <property type="entry name" value="RuvA_N"/>
    <property type="match status" value="1"/>
</dbReference>
<dbReference type="SUPFAM" id="SSF46929">
    <property type="entry name" value="DNA helicase RuvA subunit, C-terminal domain"/>
    <property type="match status" value="1"/>
</dbReference>
<dbReference type="SUPFAM" id="SSF50249">
    <property type="entry name" value="Nucleic acid-binding proteins"/>
    <property type="match status" value="1"/>
</dbReference>
<dbReference type="SUPFAM" id="SSF47781">
    <property type="entry name" value="RuvA domain 2-like"/>
    <property type="match status" value="1"/>
</dbReference>
<comment type="function">
    <text evidence="1">The RuvA-RuvB-RuvC complex processes Holliday junction (HJ) DNA during genetic recombination and DNA repair, while the RuvA-RuvB complex plays an important role in the rescue of blocked DNA replication forks via replication fork reversal (RFR). RuvA specifically binds to HJ cruciform DNA, conferring on it an open structure. The RuvB hexamer acts as an ATP-dependent pump, pulling dsDNA into and through the RuvAB complex. HJ branch migration allows RuvC to scan DNA until it finds its consensus sequence, where it cleaves and resolves the cruciform DNA.</text>
</comment>
<comment type="subunit">
    <text evidence="1">Homotetramer. Forms an RuvA(8)-RuvB(12)-Holliday junction (HJ) complex. HJ DNA is sandwiched between 2 RuvA tetramers; dsDNA enters through RuvA and exits via RuvB. An RuvB hexamer assembles on each DNA strand where it exits the tetramer. Each RuvB hexamer is contacted by two RuvA subunits (via domain III) on 2 adjacent RuvB subunits; this complex drives branch migration. In the full resolvosome a probable DNA-RuvA(4)-RuvB(12)-RuvC(2) complex forms which resolves the HJ.</text>
</comment>
<comment type="subcellular location">
    <subcellularLocation>
        <location evidence="1">Cytoplasm</location>
    </subcellularLocation>
</comment>
<comment type="domain">
    <text evidence="1">Has three domains with a flexible linker between the domains II and III and assumes an 'L' shape. Domain III is highly mobile and contacts RuvB.</text>
</comment>
<comment type="similarity">
    <text evidence="1">Belongs to the RuvA family.</text>
</comment>
<organism>
    <name type="scientific">Neorickettsia sennetsu (strain ATCC VR-367 / Miyayama)</name>
    <name type="common">Ehrlichia sennetsu</name>
    <dbReference type="NCBI Taxonomy" id="222891"/>
    <lineage>
        <taxon>Bacteria</taxon>
        <taxon>Pseudomonadati</taxon>
        <taxon>Pseudomonadota</taxon>
        <taxon>Alphaproteobacteria</taxon>
        <taxon>Rickettsiales</taxon>
        <taxon>Anaplasmataceae</taxon>
        <taxon>Neorickettsia</taxon>
    </lineage>
</organism>
<protein>
    <recommendedName>
        <fullName evidence="1">Holliday junction branch migration complex subunit RuvA</fullName>
    </recommendedName>
</protein>
<name>RUVA_NEOSM</name>
<keyword id="KW-0963">Cytoplasm</keyword>
<keyword id="KW-0227">DNA damage</keyword>
<keyword id="KW-0233">DNA recombination</keyword>
<keyword id="KW-0234">DNA repair</keyword>
<keyword id="KW-0238">DNA-binding</keyword>
<accession>Q2GDJ1</accession>
<reference key="1">
    <citation type="journal article" date="2006" name="PLoS Genet.">
        <title>Comparative genomics of emerging human ehrlichiosis agents.</title>
        <authorList>
            <person name="Dunning Hotopp J.C."/>
            <person name="Lin M."/>
            <person name="Madupu R."/>
            <person name="Crabtree J."/>
            <person name="Angiuoli S.V."/>
            <person name="Eisen J.A."/>
            <person name="Seshadri R."/>
            <person name="Ren Q."/>
            <person name="Wu M."/>
            <person name="Utterback T.R."/>
            <person name="Smith S."/>
            <person name="Lewis M."/>
            <person name="Khouri H."/>
            <person name="Zhang C."/>
            <person name="Niu H."/>
            <person name="Lin Q."/>
            <person name="Ohashi N."/>
            <person name="Zhi N."/>
            <person name="Nelson W.C."/>
            <person name="Brinkac L.M."/>
            <person name="Dodson R.J."/>
            <person name="Rosovitz M.J."/>
            <person name="Sundaram J.P."/>
            <person name="Daugherty S.C."/>
            <person name="Davidsen T."/>
            <person name="Durkin A.S."/>
            <person name="Gwinn M.L."/>
            <person name="Haft D.H."/>
            <person name="Selengut J.D."/>
            <person name="Sullivan S.A."/>
            <person name="Zafar N."/>
            <person name="Zhou L."/>
            <person name="Benahmed F."/>
            <person name="Forberger H."/>
            <person name="Halpin R."/>
            <person name="Mulligan S."/>
            <person name="Robinson J."/>
            <person name="White O."/>
            <person name="Rikihisa Y."/>
            <person name="Tettelin H."/>
        </authorList>
    </citation>
    <scope>NUCLEOTIDE SEQUENCE [LARGE SCALE GENOMIC DNA]</scope>
    <source>
        <strain>ATCC VR-367 / Miyayama</strain>
    </source>
</reference>
<gene>
    <name evidence="1" type="primary">ruvA</name>
    <name type="ordered locus">NSE_0574</name>
</gene>